<feature type="signal peptide" evidence="6">
    <location>
        <begin position="1"/>
        <end position="28"/>
    </location>
</feature>
<feature type="chain" id="PRO_0000000353" description="Neuronal acetylcholine receptor subunit alpha-4">
    <location>
        <begin position="29"/>
        <end position="627"/>
    </location>
</feature>
<feature type="topological domain" description="Extracellular" evidence="6">
    <location>
        <begin position="29"/>
        <end position="242"/>
    </location>
</feature>
<feature type="transmembrane region" description="Helical" evidence="6">
    <location>
        <begin position="243"/>
        <end position="267"/>
    </location>
</feature>
<feature type="transmembrane region" description="Helical" evidence="6">
    <location>
        <begin position="275"/>
        <end position="293"/>
    </location>
</feature>
<feature type="transmembrane region" description="Helical" evidence="6">
    <location>
        <begin position="309"/>
        <end position="330"/>
    </location>
</feature>
<feature type="topological domain" description="Cytoplasmic" evidence="6">
    <location>
        <begin position="331"/>
        <end position="600"/>
    </location>
</feature>
<feature type="transmembrane region" description="Helical" evidence="6">
    <location>
        <begin position="601"/>
        <end position="619"/>
    </location>
</feature>
<feature type="region of interest" description="Disordered" evidence="7">
    <location>
        <begin position="382"/>
        <end position="479"/>
    </location>
</feature>
<feature type="region of interest" description="Disordered" evidence="7">
    <location>
        <begin position="497"/>
        <end position="559"/>
    </location>
</feature>
<feature type="binding site" evidence="5">
    <location>
        <position position="76"/>
    </location>
    <ligand>
        <name>Ca(2+)</name>
        <dbReference type="ChEBI" id="CHEBI:29108"/>
    </ligand>
</feature>
<feature type="binding site" evidence="5">
    <location>
        <position position="78"/>
    </location>
    <ligand>
        <name>Ca(2+)</name>
        <dbReference type="ChEBI" id="CHEBI:29108"/>
    </ligand>
</feature>
<feature type="modified residue" description="Phosphoserine" evidence="4">
    <location>
        <position position="424"/>
    </location>
</feature>
<feature type="modified residue" description="Phosphoserine" evidence="1">
    <location>
        <position position="538"/>
    </location>
</feature>
<feature type="modified residue" description="Phosphoserine" evidence="1">
    <location>
        <position position="541"/>
    </location>
</feature>
<feature type="lipid moiety-binding region" description="S-palmitoyl cysteine" evidence="3">
    <location>
        <position position="271"/>
    </location>
</feature>
<feature type="glycosylation site" description="N-linked (GlcNAc...) asparagine" evidence="6">
    <location>
        <position position="57"/>
    </location>
</feature>
<feature type="glycosylation site" description="N-linked (GlcNAc...) asparagine" evidence="6">
    <location>
        <position position="107"/>
    </location>
</feature>
<feature type="glycosylation site" description="N-linked (GlcNAc...) asparagine" evidence="6">
    <location>
        <position position="174"/>
    </location>
</feature>
<feature type="disulfide bond" evidence="5">
    <location>
        <begin position="161"/>
        <end position="175"/>
    </location>
</feature>
<feature type="disulfide bond" description="Associated with receptor activation" evidence="5">
    <location>
        <begin position="225"/>
        <end position="226"/>
    </location>
</feature>
<sequence length="627" mass="69952">MELGGPGAPRLLPPLLLLLGTGLLRASSHVETRAHAEERLLKKLFSGYNKWSRPVANISDVVLVRFGLSIAQLIDVDEKNQMMTTNVWVKQEWHDYKLRWDPADYENVTSIRIPSELIWRPDIVLYNNADGDFAVTHLTKAHLFHDGRVQWTPPAIYKSSCSIDVTFFPFDQQNCTMKFGSWTYDKAKIDLVNMHSRVDQLDFWESGEWVIVDAVGTYNTRKYECCAEIYPDITYAFVIRRLPLFYTINLIIPCLLISCLTVLVFYLPSECGEKITLCISVLLSLTVFLLLITEIIPSTSLVIPLIGEYLLFTMIFVTLSIVITVFVLNVHHRSPRTHTMPTWVRRVFLDIVPRLLLMKRPSVVKDNCRRLIESMHKMASAPRFWPEPEGEPPATSGTQSLHPPSPSFCIPLDVPAEPGPSCKSPSDQLPAQQPLEAEKASPHASPGPCRPPHGTQAPGLAKARSLSVQHMSSPGEAVEGGIRCRSRSIQYCVPRDDATSEAGGQAAGALASRNTHSAELPPPDRPSPCKCTCKKEPSSVSPSATVKARSTKAPPRHLPLSPALTRAVEGVQYIADHLKAEDTDFSVKEDWKYVAMVIDRIFLWMFIIVCLLGTVGLFLPPWLAGMI</sequence>
<accession>Q5IS77</accession>
<organism>
    <name type="scientific">Pan troglodytes</name>
    <name type="common">Chimpanzee</name>
    <dbReference type="NCBI Taxonomy" id="9598"/>
    <lineage>
        <taxon>Eukaryota</taxon>
        <taxon>Metazoa</taxon>
        <taxon>Chordata</taxon>
        <taxon>Craniata</taxon>
        <taxon>Vertebrata</taxon>
        <taxon>Euteleostomi</taxon>
        <taxon>Mammalia</taxon>
        <taxon>Eutheria</taxon>
        <taxon>Euarchontoglires</taxon>
        <taxon>Primates</taxon>
        <taxon>Haplorrhini</taxon>
        <taxon>Catarrhini</taxon>
        <taxon>Hominidae</taxon>
        <taxon>Pan</taxon>
    </lineage>
</organism>
<gene>
    <name type="primary">CHRNA4</name>
</gene>
<reference key="1">
    <citation type="journal article" date="2004" name="Cell">
        <title>Accelerated evolution of nervous system genes in the origin of Homo sapiens.</title>
        <authorList>
            <person name="Dorus S."/>
            <person name="Vallender E.J."/>
            <person name="Evans P.D."/>
            <person name="Anderson J.R."/>
            <person name="Gilbert S.L."/>
            <person name="Mahowald M."/>
            <person name="Wyckoff G.J."/>
            <person name="Malcom C.M."/>
            <person name="Lahn B.T."/>
        </authorList>
    </citation>
    <scope>NUCLEOTIDE SEQUENCE [MRNA]</scope>
</reference>
<keyword id="KW-0106">Calcium</keyword>
<keyword id="KW-1003">Cell membrane</keyword>
<keyword id="KW-1015">Disulfide bond</keyword>
<keyword id="KW-0325">Glycoprotein</keyword>
<keyword id="KW-0407">Ion channel</keyword>
<keyword id="KW-0406">Ion transport</keyword>
<keyword id="KW-1071">Ligand-gated ion channel</keyword>
<keyword id="KW-0449">Lipoprotein</keyword>
<keyword id="KW-0472">Membrane</keyword>
<keyword id="KW-0479">Metal-binding</keyword>
<keyword id="KW-0564">Palmitate</keyword>
<keyword id="KW-0597">Phosphoprotein</keyword>
<keyword id="KW-0675">Receptor</keyword>
<keyword id="KW-1185">Reference proteome</keyword>
<keyword id="KW-0732">Signal</keyword>
<keyword id="KW-0770">Synapse</keyword>
<keyword id="KW-0812">Transmembrane</keyword>
<keyword id="KW-1133">Transmembrane helix</keyword>
<keyword id="KW-0813">Transport</keyword>
<proteinExistence type="evidence at transcript level"/>
<dbReference type="EMBL" id="AY665251">
    <property type="protein sequence ID" value="AAV74289.1"/>
    <property type="molecule type" value="mRNA"/>
</dbReference>
<dbReference type="RefSeq" id="NP_001029286.1">
    <property type="nucleotide sequence ID" value="NM_001034114.1"/>
</dbReference>
<dbReference type="SMR" id="Q5IS77"/>
<dbReference type="FunCoup" id="Q5IS77">
    <property type="interactions" value="639"/>
</dbReference>
<dbReference type="STRING" id="9598.ENSPTRP00000088336"/>
<dbReference type="GlyCosmos" id="Q5IS77">
    <property type="glycosylation" value="3 sites, No reported glycans"/>
</dbReference>
<dbReference type="PaxDb" id="9598-ENSPTRP00000023650"/>
<dbReference type="Ensembl" id="ENSPTRT00000061821.3">
    <property type="protein sequence ID" value="ENSPTRP00000054364.3"/>
    <property type="gene ID" value="ENSPTRG00000013735.7"/>
</dbReference>
<dbReference type="GeneID" id="469999"/>
<dbReference type="KEGG" id="ptr:469999"/>
<dbReference type="CTD" id="1137"/>
<dbReference type="VGNC" id="VGNC:51755">
    <property type="gene designation" value="CHRNA4"/>
</dbReference>
<dbReference type="eggNOG" id="KOG3645">
    <property type="taxonomic scope" value="Eukaryota"/>
</dbReference>
<dbReference type="GeneTree" id="ENSGT00940000159329"/>
<dbReference type="InParanoid" id="Q5IS77"/>
<dbReference type="OMA" id="HCRRLIE"/>
<dbReference type="OrthoDB" id="14145at9604"/>
<dbReference type="Proteomes" id="UP000002277">
    <property type="component" value="Chromosome 20"/>
</dbReference>
<dbReference type="Bgee" id="ENSPTRG00000013735">
    <property type="expression patterns" value="Expressed in dorsolateral prefrontal cortex and 8 other cell types or tissues"/>
</dbReference>
<dbReference type="GO" id="GO:0005892">
    <property type="term" value="C:acetylcholine-gated channel complex"/>
    <property type="evidence" value="ECO:0000250"/>
    <property type="project" value="UniProtKB"/>
</dbReference>
<dbReference type="GO" id="GO:0043005">
    <property type="term" value="C:neuron projection"/>
    <property type="evidence" value="ECO:0000318"/>
    <property type="project" value="GO_Central"/>
</dbReference>
<dbReference type="GO" id="GO:0005886">
    <property type="term" value="C:plasma membrane"/>
    <property type="evidence" value="ECO:0000318"/>
    <property type="project" value="GO_Central"/>
</dbReference>
<dbReference type="GO" id="GO:0045211">
    <property type="term" value="C:postsynaptic membrane"/>
    <property type="evidence" value="ECO:0007669"/>
    <property type="project" value="UniProtKB-KW"/>
</dbReference>
<dbReference type="GO" id="GO:0042734">
    <property type="term" value="C:presynaptic membrane"/>
    <property type="evidence" value="ECO:0000250"/>
    <property type="project" value="UniProtKB"/>
</dbReference>
<dbReference type="GO" id="GO:0045202">
    <property type="term" value="C:synapse"/>
    <property type="evidence" value="ECO:0000318"/>
    <property type="project" value="GO_Central"/>
</dbReference>
<dbReference type="GO" id="GO:0015464">
    <property type="term" value="F:acetylcholine receptor activity"/>
    <property type="evidence" value="ECO:0000250"/>
    <property type="project" value="UniProtKB"/>
</dbReference>
<dbReference type="GO" id="GO:0022848">
    <property type="term" value="F:acetylcholine-gated monoatomic cation-selective channel activity"/>
    <property type="evidence" value="ECO:0000250"/>
    <property type="project" value="UniProtKB"/>
</dbReference>
<dbReference type="GO" id="GO:0095500">
    <property type="term" value="P:acetylcholine receptor signaling pathway"/>
    <property type="evidence" value="ECO:0000250"/>
    <property type="project" value="UniProtKB"/>
</dbReference>
<dbReference type="GO" id="GO:0035095">
    <property type="term" value="P:behavioral response to nicotine"/>
    <property type="evidence" value="ECO:0000250"/>
    <property type="project" value="UniProtKB"/>
</dbReference>
<dbReference type="GO" id="GO:0050890">
    <property type="term" value="P:cognition"/>
    <property type="evidence" value="ECO:0000250"/>
    <property type="project" value="UniProtKB"/>
</dbReference>
<dbReference type="GO" id="GO:0006281">
    <property type="term" value="P:DNA repair"/>
    <property type="evidence" value="ECO:0000250"/>
    <property type="project" value="UniProtKB"/>
</dbReference>
<dbReference type="GO" id="GO:0051899">
    <property type="term" value="P:membrane depolarization"/>
    <property type="evidence" value="ECO:0000318"/>
    <property type="project" value="GO_Central"/>
</dbReference>
<dbReference type="GO" id="GO:0034220">
    <property type="term" value="P:monoatomic ion transmembrane transport"/>
    <property type="evidence" value="ECO:0000318"/>
    <property type="project" value="GO_Central"/>
</dbReference>
<dbReference type="GO" id="GO:0050877">
    <property type="term" value="P:nervous system process"/>
    <property type="evidence" value="ECO:0000250"/>
    <property type="project" value="UniProtKB"/>
</dbReference>
<dbReference type="GO" id="GO:0007274">
    <property type="term" value="P:neuromuscular synaptic transmission"/>
    <property type="evidence" value="ECO:0000318"/>
    <property type="project" value="GO_Central"/>
</dbReference>
<dbReference type="GO" id="GO:0001666">
    <property type="term" value="P:response to hypoxia"/>
    <property type="evidence" value="ECO:0000250"/>
    <property type="project" value="UniProtKB"/>
</dbReference>
<dbReference type="GO" id="GO:0035094">
    <property type="term" value="P:response to nicotine"/>
    <property type="evidence" value="ECO:0000318"/>
    <property type="project" value="GO_Central"/>
</dbReference>
<dbReference type="GO" id="GO:0006979">
    <property type="term" value="P:response to oxidative stress"/>
    <property type="evidence" value="ECO:0000250"/>
    <property type="project" value="UniProtKB"/>
</dbReference>
<dbReference type="GO" id="GO:0007165">
    <property type="term" value="P:signal transduction"/>
    <property type="evidence" value="ECO:0000250"/>
    <property type="project" value="UniProtKB"/>
</dbReference>
<dbReference type="GO" id="GO:0007271">
    <property type="term" value="P:synaptic transmission, cholinergic"/>
    <property type="evidence" value="ECO:0000250"/>
    <property type="project" value="UniProtKB"/>
</dbReference>
<dbReference type="CDD" id="cd19064">
    <property type="entry name" value="LGIC_TM_nAChR"/>
    <property type="match status" value="1"/>
</dbReference>
<dbReference type="FunFam" id="1.20.58.390:FF:000014">
    <property type="entry name" value="Neuronal nicotinic acetylcholine receptor alpha4 subunit"/>
    <property type="match status" value="1"/>
</dbReference>
<dbReference type="FunFam" id="2.70.170.10:FF:000005">
    <property type="entry name" value="Neuronal nicotinic acetylcholine receptor alpha4 subunit"/>
    <property type="match status" value="1"/>
</dbReference>
<dbReference type="FunFam" id="1.20.58.390:FF:000001">
    <property type="entry name" value="Neuronal nicotinic acetylcholine receptor subunit 3"/>
    <property type="match status" value="1"/>
</dbReference>
<dbReference type="Gene3D" id="2.70.170.10">
    <property type="entry name" value="Neurotransmitter-gated ion-channel ligand-binding domain"/>
    <property type="match status" value="1"/>
</dbReference>
<dbReference type="Gene3D" id="1.20.58.390">
    <property type="entry name" value="Neurotransmitter-gated ion-channel transmembrane domain"/>
    <property type="match status" value="2"/>
</dbReference>
<dbReference type="InterPro" id="IPR006202">
    <property type="entry name" value="Neur_chan_lig-bd"/>
</dbReference>
<dbReference type="InterPro" id="IPR036734">
    <property type="entry name" value="Neur_chan_lig-bd_sf"/>
</dbReference>
<dbReference type="InterPro" id="IPR006201">
    <property type="entry name" value="Neur_channel"/>
</dbReference>
<dbReference type="InterPro" id="IPR036719">
    <property type="entry name" value="Neuro-gated_channel_TM_sf"/>
</dbReference>
<dbReference type="InterPro" id="IPR038050">
    <property type="entry name" value="Neuro_actylchol_rec"/>
</dbReference>
<dbReference type="InterPro" id="IPR006029">
    <property type="entry name" value="Neurotrans-gated_channel_TM"/>
</dbReference>
<dbReference type="InterPro" id="IPR018000">
    <property type="entry name" value="Neurotransmitter_ion_chnl_CS"/>
</dbReference>
<dbReference type="InterPro" id="IPR002394">
    <property type="entry name" value="Nicotinic_acetylcholine_rcpt"/>
</dbReference>
<dbReference type="NCBIfam" id="TIGR00860">
    <property type="entry name" value="LIC"/>
    <property type="match status" value="1"/>
</dbReference>
<dbReference type="PANTHER" id="PTHR18945">
    <property type="entry name" value="NEUROTRANSMITTER GATED ION CHANNEL"/>
    <property type="match status" value="1"/>
</dbReference>
<dbReference type="Pfam" id="PF02931">
    <property type="entry name" value="Neur_chan_LBD"/>
    <property type="match status" value="1"/>
</dbReference>
<dbReference type="Pfam" id="PF02932">
    <property type="entry name" value="Neur_chan_memb"/>
    <property type="match status" value="1"/>
</dbReference>
<dbReference type="PRINTS" id="PR00254">
    <property type="entry name" value="NICOTINICR"/>
</dbReference>
<dbReference type="PRINTS" id="PR00252">
    <property type="entry name" value="NRIONCHANNEL"/>
</dbReference>
<dbReference type="SUPFAM" id="SSF90112">
    <property type="entry name" value="Neurotransmitter-gated ion-channel transmembrane pore"/>
    <property type="match status" value="1"/>
</dbReference>
<dbReference type="SUPFAM" id="SSF63712">
    <property type="entry name" value="Nicotinic receptor ligand binding domain-like"/>
    <property type="match status" value="1"/>
</dbReference>
<dbReference type="PROSITE" id="PS00236">
    <property type="entry name" value="NEUROTR_ION_CHANNEL"/>
    <property type="match status" value="1"/>
</dbReference>
<evidence type="ECO:0000250" key="1">
    <source>
        <dbReference type="UniProtKB" id="O70174"/>
    </source>
</evidence>
<evidence type="ECO:0000250" key="2">
    <source>
        <dbReference type="UniProtKB" id="P02709"/>
    </source>
</evidence>
<evidence type="ECO:0000250" key="3">
    <source>
        <dbReference type="UniProtKB" id="P04757"/>
    </source>
</evidence>
<evidence type="ECO:0000250" key="4">
    <source>
        <dbReference type="UniProtKB" id="P09483"/>
    </source>
</evidence>
<evidence type="ECO:0000250" key="5">
    <source>
        <dbReference type="UniProtKB" id="P43681"/>
    </source>
</evidence>
<evidence type="ECO:0000255" key="6"/>
<evidence type="ECO:0000256" key="7">
    <source>
        <dbReference type="SAM" id="MobiDB-lite"/>
    </source>
</evidence>
<evidence type="ECO:0000305" key="8"/>
<comment type="function">
    <text evidence="1 5">Component of neuronal acetylcholine receptors (nAChRs) that function as pentameric, ligand-gated cation channels with high calcium permeability among other activities. nAChRs are excitatory neurotrasnmitter receptors formed by a collection of nAChR subunits known to mediate synaptic transmission in the nervous system and the neuromuscular junction. Each nAchR subunit confers differential attributes to channel properties, including activation, deactivation and desensitization kinetics, pH sensitivity, cation permeability, and binding to allosteric modulators. CHRNA4 forms heteropentameric neuronal acetylcholine receptors with CHRNB2 and CHRNB4, as well as CHRNA5 and CHRNB3 as accesory subunits. Is the most abundant nAChR subtype expressed in the central nervous system (By similarity). Found in two major stoichiometric forms,(CHRNA4)3:(CHRNB2)2 and (CHRNA4)2:(CHRNB2)3, the two stoichiometric forms differ in their unitary conductance, calcium permeability, ACh sensitivity and potentiation by divalent cation (By similarity). Involved in the modulation of calcium-dependent signaling pathways, influences the release of neurotransmitters, including dopamine, glutamate and GABA (By similarity).</text>
</comment>
<comment type="catalytic activity">
    <reaction evidence="5">
        <text>Ca(2+)(in) = Ca(2+)(out)</text>
        <dbReference type="Rhea" id="RHEA:29671"/>
        <dbReference type="ChEBI" id="CHEBI:29108"/>
    </reaction>
</comment>
<comment type="catalytic activity">
    <reaction evidence="2">
        <text>K(+)(in) = K(+)(out)</text>
        <dbReference type="Rhea" id="RHEA:29463"/>
        <dbReference type="ChEBI" id="CHEBI:29103"/>
    </reaction>
</comment>
<comment type="catalytic activity">
    <reaction evidence="5">
        <text>Na(+)(in) = Na(+)(out)</text>
        <dbReference type="Rhea" id="RHEA:34963"/>
        <dbReference type="ChEBI" id="CHEBI:29101"/>
    </reaction>
</comment>
<comment type="activity regulation">
    <text evidence="4 5">Activated by a myriad of ligands such as acetylcholine, cytisine, nicotine, choline and epibatidine. Channel potentiation by calcium is stoichiometry-selective, CHRNA4:CHRNB2 nACh receptor is achieved by calcium association with topographically distinct sites framed by anionic residues within the CHRNA4 subunit and between the CHRNA4 and CHRNB2 subunits (By similarity). nAChR activity is inhibited by the antagonist alpha-conotoxins BuIA, PnIA, GID and MII, small disulfide-constrained peptides from cone snails (By similarity).</text>
</comment>
<comment type="subunit">
    <text evidence="1 4 5">Neuronal AChR is composed of two different types of subunits: alpha and beta. CHRNA4 forms heteropentameric neuronal acetylcholine receptors with CHRNB2 and CHRNB4, as well as CHRNA5 and CHRNB3 as accesory subunits (By similarity). Found in two major stoichiometric forms, LS (low agonist sensitivity): (CHRNA4)3:(CHRNB2)2 and HS (high agonist sensitivity): (CHRNA4)2:(CHRNB2)3, the two stoichiometric forms differ in their unitary conductance, calcium permeability, ACh sensitivity and potentiation by divalent cation. Cells produce predominantly an (CHRNA4)3:(CHRNB2)2 nAChR. The (CHRNA4)2:(CHRNB2)3 expression is selectively up-regulated by nicotine and has lower single channel conductance and calcium permeability (By similarity). In the striatum, also forms CHRNA4:CHRNA6:CHRNB2 complexes (By similarity). Also found in the stoichiometric form: (CHRNA4:CHRNB2)2:CHRNB3 (By similarity). Interacts with RIC3; which is required for proper folding and assembly. Interacts with LYPD6 (By similarity).</text>
</comment>
<comment type="subcellular location">
    <subcellularLocation>
        <location evidence="1">Synaptic cell membrane</location>
        <topology evidence="6">Multi-pass membrane protein</topology>
    </subcellularLocation>
    <subcellularLocation>
        <location evidence="1">Cell membrane</location>
        <topology evidence="6">Multi-pass membrane protein</topology>
    </subcellularLocation>
</comment>
<comment type="similarity">
    <text evidence="8">Belongs to the ligand-gated ion channel (TC 1.A.9) family. Acetylcholine receptor (TC 1.A.9.1) subfamily. Alpha-4/CHRNA4 sub-subfamily.</text>
</comment>
<protein>
    <recommendedName>
        <fullName>Neuronal acetylcholine receptor subunit alpha-4</fullName>
    </recommendedName>
</protein>
<name>ACHA4_PANTR</name>